<feature type="chain" id="PRO_1000204417" description="Adenylate kinase">
    <location>
        <begin position="1"/>
        <end position="188"/>
    </location>
</feature>
<feature type="region of interest" description="NMP" evidence="1">
    <location>
        <begin position="31"/>
        <end position="60"/>
    </location>
</feature>
<feature type="region of interest" description="LID" evidence="1">
    <location>
        <begin position="127"/>
        <end position="137"/>
    </location>
</feature>
<feature type="binding site" evidence="1">
    <location>
        <begin position="11"/>
        <end position="16"/>
    </location>
    <ligand>
        <name>ATP</name>
        <dbReference type="ChEBI" id="CHEBI:30616"/>
    </ligand>
</feature>
<feature type="binding site" evidence="1">
    <location>
        <position position="32"/>
    </location>
    <ligand>
        <name>AMP</name>
        <dbReference type="ChEBI" id="CHEBI:456215"/>
    </ligand>
</feature>
<feature type="binding site" evidence="1">
    <location>
        <position position="37"/>
    </location>
    <ligand>
        <name>AMP</name>
        <dbReference type="ChEBI" id="CHEBI:456215"/>
    </ligand>
</feature>
<feature type="binding site" evidence="1">
    <location>
        <begin position="58"/>
        <end position="60"/>
    </location>
    <ligand>
        <name>AMP</name>
        <dbReference type="ChEBI" id="CHEBI:456215"/>
    </ligand>
</feature>
<feature type="binding site" evidence="1">
    <location>
        <begin position="86"/>
        <end position="89"/>
    </location>
    <ligand>
        <name>AMP</name>
        <dbReference type="ChEBI" id="CHEBI:456215"/>
    </ligand>
</feature>
<feature type="binding site" evidence="1">
    <location>
        <position position="93"/>
    </location>
    <ligand>
        <name>AMP</name>
        <dbReference type="ChEBI" id="CHEBI:456215"/>
    </ligand>
</feature>
<feature type="binding site" evidence="1">
    <location>
        <position position="128"/>
    </location>
    <ligand>
        <name>ATP</name>
        <dbReference type="ChEBI" id="CHEBI:30616"/>
    </ligand>
</feature>
<feature type="binding site" evidence="1">
    <location>
        <position position="134"/>
    </location>
    <ligand>
        <name>AMP</name>
        <dbReference type="ChEBI" id="CHEBI:456215"/>
    </ligand>
</feature>
<feature type="binding site" evidence="1">
    <location>
        <position position="145"/>
    </location>
    <ligand>
        <name>AMP</name>
        <dbReference type="ChEBI" id="CHEBI:456215"/>
    </ligand>
</feature>
<feature type="binding site" evidence="1">
    <location>
        <position position="173"/>
    </location>
    <ligand>
        <name>ATP</name>
        <dbReference type="ChEBI" id="CHEBI:30616"/>
    </ligand>
</feature>
<gene>
    <name evidence="1" type="primary">adk</name>
    <name type="ordered locus">KRH_06360</name>
</gene>
<sequence>MTRMLIIGPPGAGKGTQAARISERLGVPAISTGDIFRANIKDQTELGREAQRYTDAGNLVPDSVTNEMVRDRLSHEDVSGGFLLDGYPRTVAQVEELDRILEANGVGLDVVLLLTADNDELVSRLLGRAQEQGRTDDTEDVIRHRLDVYDEQTAPVVGVYEDRGIVVRVDGLGSIDHVTERIMAALER</sequence>
<dbReference type="EC" id="2.7.4.3" evidence="1"/>
<dbReference type="EMBL" id="AP009152">
    <property type="protein sequence ID" value="BAG28983.1"/>
    <property type="molecule type" value="Genomic_DNA"/>
</dbReference>
<dbReference type="RefSeq" id="WP_012397708.1">
    <property type="nucleotide sequence ID" value="NZ_VECX01000001.1"/>
</dbReference>
<dbReference type="SMR" id="B2GJ13"/>
<dbReference type="STRING" id="378753.KRH_06360"/>
<dbReference type="KEGG" id="krh:KRH_06360"/>
<dbReference type="eggNOG" id="COG0563">
    <property type="taxonomic scope" value="Bacteria"/>
</dbReference>
<dbReference type="HOGENOM" id="CLU_032354_4_1_11"/>
<dbReference type="OrthoDB" id="9805030at2"/>
<dbReference type="UniPathway" id="UPA00588">
    <property type="reaction ID" value="UER00649"/>
</dbReference>
<dbReference type="Proteomes" id="UP000008838">
    <property type="component" value="Chromosome"/>
</dbReference>
<dbReference type="GO" id="GO:0005737">
    <property type="term" value="C:cytoplasm"/>
    <property type="evidence" value="ECO:0007669"/>
    <property type="project" value="UniProtKB-SubCell"/>
</dbReference>
<dbReference type="GO" id="GO:0004017">
    <property type="term" value="F:adenylate kinase activity"/>
    <property type="evidence" value="ECO:0007669"/>
    <property type="project" value="UniProtKB-UniRule"/>
</dbReference>
<dbReference type="GO" id="GO:0005524">
    <property type="term" value="F:ATP binding"/>
    <property type="evidence" value="ECO:0007669"/>
    <property type="project" value="UniProtKB-UniRule"/>
</dbReference>
<dbReference type="GO" id="GO:0044209">
    <property type="term" value="P:AMP salvage"/>
    <property type="evidence" value="ECO:0007669"/>
    <property type="project" value="UniProtKB-UniRule"/>
</dbReference>
<dbReference type="CDD" id="cd01428">
    <property type="entry name" value="ADK"/>
    <property type="match status" value="1"/>
</dbReference>
<dbReference type="Gene3D" id="3.40.50.300">
    <property type="entry name" value="P-loop containing nucleotide triphosphate hydrolases"/>
    <property type="match status" value="1"/>
</dbReference>
<dbReference type="HAMAP" id="MF_00235">
    <property type="entry name" value="Adenylate_kinase_Adk"/>
    <property type="match status" value="1"/>
</dbReference>
<dbReference type="InterPro" id="IPR000850">
    <property type="entry name" value="Adenylat/UMP-CMP_kin"/>
</dbReference>
<dbReference type="InterPro" id="IPR033690">
    <property type="entry name" value="Adenylat_kinase_CS"/>
</dbReference>
<dbReference type="InterPro" id="IPR027417">
    <property type="entry name" value="P-loop_NTPase"/>
</dbReference>
<dbReference type="NCBIfam" id="NF001381">
    <property type="entry name" value="PRK00279.1-3"/>
    <property type="match status" value="1"/>
</dbReference>
<dbReference type="NCBIfam" id="NF011100">
    <property type="entry name" value="PRK14527.1"/>
    <property type="match status" value="1"/>
</dbReference>
<dbReference type="NCBIfam" id="NF011101">
    <property type="entry name" value="PRK14528.1"/>
    <property type="match status" value="1"/>
</dbReference>
<dbReference type="NCBIfam" id="NF011104">
    <property type="entry name" value="PRK14531.1"/>
    <property type="match status" value="1"/>
</dbReference>
<dbReference type="NCBIfam" id="NF011105">
    <property type="entry name" value="PRK14532.1"/>
    <property type="match status" value="1"/>
</dbReference>
<dbReference type="PANTHER" id="PTHR23359">
    <property type="entry name" value="NUCLEOTIDE KINASE"/>
    <property type="match status" value="1"/>
</dbReference>
<dbReference type="Pfam" id="PF00406">
    <property type="entry name" value="ADK"/>
    <property type="match status" value="1"/>
</dbReference>
<dbReference type="PRINTS" id="PR00094">
    <property type="entry name" value="ADENYLTKNASE"/>
</dbReference>
<dbReference type="SUPFAM" id="SSF52540">
    <property type="entry name" value="P-loop containing nucleoside triphosphate hydrolases"/>
    <property type="match status" value="1"/>
</dbReference>
<dbReference type="PROSITE" id="PS00113">
    <property type="entry name" value="ADENYLATE_KINASE"/>
    <property type="match status" value="1"/>
</dbReference>
<reference key="1">
    <citation type="journal article" date="2008" name="J. Bacteriol.">
        <title>Complete genome sequence of the soil actinomycete Kocuria rhizophila.</title>
        <authorList>
            <person name="Takarada H."/>
            <person name="Sekine M."/>
            <person name="Kosugi H."/>
            <person name="Matsuo Y."/>
            <person name="Fujisawa T."/>
            <person name="Omata S."/>
            <person name="Kishi E."/>
            <person name="Shimizu A."/>
            <person name="Tsukatani N."/>
            <person name="Tanikawa S."/>
            <person name="Fujita N."/>
            <person name="Harayama S."/>
        </authorList>
    </citation>
    <scope>NUCLEOTIDE SEQUENCE [LARGE SCALE GENOMIC DNA]</scope>
    <source>
        <strain>ATCC 9341 / DSM 348 / NBRC 103217 / DC2201</strain>
    </source>
</reference>
<keyword id="KW-0067">ATP-binding</keyword>
<keyword id="KW-0963">Cytoplasm</keyword>
<keyword id="KW-0418">Kinase</keyword>
<keyword id="KW-0545">Nucleotide biosynthesis</keyword>
<keyword id="KW-0547">Nucleotide-binding</keyword>
<keyword id="KW-1185">Reference proteome</keyword>
<keyword id="KW-0808">Transferase</keyword>
<organism>
    <name type="scientific">Kocuria rhizophila (strain ATCC 9341 / DSM 348 / NBRC 103217 / DC2201)</name>
    <dbReference type="NCBI Taxonomy" id="378753"/>
    <lineage>
        <taxon>Bacteria</taxon>
        <taxon>Bacillati</taxon>
        <taxon>Actinomycetota</taxon>
        <taxon>Actinomycetes</taxon>
        <taxon>Micrococcales</taxon>
        <taxon>Micrococcaceae</taxon>
        <taxon>Kocuria</taxon>
    </lineage>
</organism>
<name>KAD_KOCRD</name>
<evidence type="ECO:0000255" key="1">
    <source>
        <dbReference type="HAMAP-Rule" id="MF_00235"/>
    </source>
</evidence>
<accession>B2GJ13</accession>
<protein>
    <recommendedName>
        <fullName evidence="1">Adenylate kinase</fullName>
        <shortName evidence="1">AK</shortName>
        <ecNumber evidence="1">2.7.4.3</ecNumber>
    </recommendedName>
    <alternativeName>
        <fullName evidence="1">ATP-AMP transphosphorylase</fullName>
    </alternativeName>
    <alternativeName>
        <fullName evidence="1">ATP:AMP phosphotransferase</fullName>
    </alternativeName>
    <alternativeName>
        <fullName evidence="1">Adenylate monophosphate kinase</fullName>
    </alternativeName>
</protein>
<proteinExistence type="inferred from homology"/>
<comment type="function">
    <text evidence="1">Catalyzes the reversible transfer of the terminal phosphate group between ATP and AMP. Plays an important role in cellular energy homeostasis and in adenine nucleotide metabolism.</text>
</comment>
<comment type="catalytic activity">
    <reaction evidence="1">
        <text>AMP + ATP = 2 ADP</text>
        <dbReference type="Rhea" id="RHEA:12973"/>
        <dbReference type="ChEBI" id="CHEBI:30616"/>
        <dbReference type="ChEBI" id="CHEBI:456215"/>
        <dbReference type="ChEBI" id="CHEBI:456216"/>
        <dbReference type="EC" id="2.7.4.3"/>
    </reaction>
</comment>
<comment type="pathway">
    <text evidence="1">Purine metabolism; AMP biosynthesis via salvage pathway; AMP from ADP: step 1/1.</text>
</comment>
<comment type="subunit">
    <text evidence="1">Monomer.</text>
</comment>
<comment type="subcellular location">
    <subcellularLocation>
        <location evidence="1">Cytoplasm</location>
    </subcellularLocation>
</comment>
<comment type="domain">
    <text evidence="1">Consists of three domains, a large central CORE domain and two small peripheral domains, NMPbind and LID, which undergo movements during catalysis. The LID domain closes over the site of phosphoryl transfer upon ATP binding. Assembling and dissambling the active center during each catalytic cycle provides an effective means to prevent ATP hydrolysis.</text>
</comment>
<comment type="similarity">
    <text evidence="1">Belongs to the adenylate kinase family.</text>
</comment>